<comment type="function">
    <text evidence="1">Component of the acetyl coenzyme A carboxylase (ACC) complex. Biotin carboxylase (BC) catalyzes the carboxylation of biotin on its carrier protein (BCCP) and then the CO(2) group is transferred by the transcarboxylase to acetyl-CoA to form malonyl-CoA.</text>
</comment>
<comment type="catalytic activity">
    <reaction evidence="1">
        <text>N(6)-carboxybiotinyl-L-lysyl-[protein] + acetyl-CoA = N(6)-biotinyl-L-lysyl-[protein] + malonyl-CoA</text>
        <dbReference type="Rhea" id="RHEA:54728"/>
        <dbReference type="Rhea" id="RHEA-COMP:10505"/>
        <dbReference type="Rhea" id="RHEA-COMP:10506"/>
        <dbReference type="ChEBI" id="CHEBI:57288"/>
        <dbReference type="ChEBI" id="CHEBI:57384"/>
        <dbReference type="ChEBI" id="CHEBI:83144"/>
        <dbReference type="ChEBI" id="CHEBI:83145"/>
        <dbReference type="EC" id="2.1.3.15"/>
    </reaction>
</comment>
<comment type="cofactor">
    <cofactor evidence="1">
        <name>Zn(2+)</name>
        <dbReference type="ChEBI" id="CHEBI:29105"/>
    </cofactor>
    <text evidence="1">Binds 1 zinc ion per subunit.</text>
</comment>
<comment type="pathway">
    <text evidence="1">Lipid metabolism; malonyl-CoA biosynthesis; malonyl-CoA from acetyl-CoA: step 1/1.</text>
</comment>
<comment type="subunit">
    <text evidence="1">Acetyl-CoA carboxylase is a heterohexamer composed of biotin carboxyl carrier protein (AccB), biotin carboxylase (AccC) and two subunits each of ACCase subunit alpha (AccA) and ACCase subunit beta (AccD).</text>
</comment>
<comment type="subcellular location">
    <subcellularLocation>
        <location evidence="1">Cytoplasm</location>
    </subcellularLocation>
</comment>
<comment type="similarity">
    <text evidence="1">Belongs to the AccD/PCCB family.</text>
</comment>
<protein>
    <recommendedName>
        <fullName evidence="1">Acetyl-coenzyme A carboxylase carboxyl transferase subunit beta</fullName>
        <shortName evidence="1">ACCase subunit beta</shortName>
        <shortName evidence="1">Acetyl-CoA carboxylase carboxyltransferase subunit beta</shortName>
        <ecNumber evidence="1">2.1.3.15</ecNumber>
    </recommendedName>
</protein>
<feature type="chain" id="PRO_0000389681" description="Acetyl-coenzyme A carboxylase carboxyl transferase subunit beta">
    <location>
        <begin position="1"/>
        <end position="289"/>
    </location>
</feature>
<feature type="domain" description="CoA carboxyltransferase N-terminal" evidence="2">
    <location>
        <begin position="28"/>
        <end position="289"/>
    </location>
</feature>
<feature type="zinc finger region" description="C4-type" evidence="1">
    <location>
        <begin position="32"/>
        <end position="54"/>
    </location>
</feature>
<feature type="binding site" evidence="1">
    <location>
        <position position="32"/>
    </location>
    <ligand>
        <name>Zn(2+)</name>
        <dbReference type="ChEBI" id="CHEBI:29105"/>
    </ligand>
</feature>
<feature type="binding site" evidence="1">
    <location>
        <position position="35"/>
    </location>
    <ligand>
        <name>Zn(2+)</name>
        <dbReference type="ChEBI" id="CHEBI:29105"/>
    </ligand>
</feature>
<feature type="binding site" evidence="1">
    <location>
        <position position="51"/>
    </location>
    <ligand>
        <name>Zn(2+)</name>
        <dbReference type="ChEBI" id="CHEBI:29105"/>
    </ligand>
</feature>
<feature type="binding site" evidence="1">
    <location>
        <position position="54"/>
    </location>
    <ligand>
        <name>Zn(2+)</name>
        <dbReference type="ChEBI" id="CHEBI:29105"/>
    </ligand>
</feature>
<reference key="1">
    <citation type="journal article" date="2008" name="Chem. Biol. Interact.">
        <title>Extending the Bacillus cereus group genomics to putative food-borne pathogens of different toxicity.</title>
        <authorList>
            <person name="Lapidus A."/>
            <person name="Goltsman E."/>
            <person name="Auger S."/>
            <person name="Galleron N."/>
            <person name="Segurens B."/>
            <person name="Dossat C."/>
            <person name="Land M.L."/>
            <person name="Broussolle V."/>
            <person name="Brillard J."/>
            <person name="Guinebretiere M.-H."/>
            <person name="Sanchis V."/>
            <person name="Nguen-the C."/>
            <person name="Lereclus D."/>
            <person name="Richardson P."/>
            <person name="Wincker P."/>
            <person name="Weissenbach J."/>
            <person name="Ehrlich S.D."/>
            <person name="Sorokin A."/>
        </authorList>
    </citation>
    <scope>NUCLEOTIDE SEQUENCE [LARGE SCALE GENOMIC DNA]</scope>
    <source>
        <strain>DSM 22905 / CIP 110041 / 391-98 / NVH 391-98</strain>
    </source>
</reference>
<name>ACCD_BACCN</name>
<sequence>MLRDLFVKKKKYAAIPSEQVRKDVPDGVMTKCPKCKKIMYTKELLKNLKVCVNCGYHHPMNAWERLDSILDEGSFREYDKEMVSVNPLQFPNYEEKLENDRKKTELNEAVVTGEGTIDEMLVVVAVMDSRFRMGSMGSVVGEKIARAVEKAYELQVPFIIFTASGGARMQEGILSLMQMAKTSVALKKYSNAGGLFISVMTHPTTGGVSASFASLGDYNLAEPGALIGFAGRRVIEQTVREKLPEDFQTAEFLLEHGQLDAVVHRNEMRESLRKILEVHQGEGMAVWQN</sequence>
<organism>
    <name type="scientific">Bacillus cytotoxicus (strain DSM 22905 / CIP 110041 / 391-98 / NVH 391-98)</name>
    <dbReference type="NCBI Taxonomy" id="315749"/>
    <lineage>
        <taxon>Bacteria</taxon>
        <taxon>Bacillati</taxon>
        <taxon>Bacillota</taxon>
        <taxon>Bacilli</taxon>
        <taxon>Bacillales</taxon>
        <taxon>Bacillaceae</taxon>
        <taxon>Bacillus</taxon>
        <taxon>Bacillus cereus group</taxon>
    </lineage>
</organism>
<proteinExistence type="inferred from homology"/>
<gene>
    <name evidence="1" type="primary">accD</name>
    <name type="ordered locus">Bcer98_3285</name>
</gene>
<keyword id="KW-0067">ATP-binding</keyword>
<keyword id="KW-0963">Cytoplasm</keyword>
<keyword id="KW-0275">Fatty acid biosynthesis</keyword>
<keyword id="KW-0276">Fatty acid metabolism</keyword>
<keyword id="KW-0444">Lipid biosynthesis</keyword>
<keyword id="KW-0443">Lipid metabolism</keyword>
<keyword id="KW-0479">Metal-binding</keyword>
<keyword id="KW-0547">Nucleotide-binding</keyword>
<keyword id="KW-0808">Transferase</keyword>
<keyword id="KW-0862">Zinc</keyword>
<keyword id="KW-0863">Zinc-finger</keyword>
<accession>A7GTP6</accession>
<dbReference type="EC" id="2.1.3.15" evidence="1"/>
<dbReference type="EMBL" id="CP000764">
    <property type="protein sequence ID" value="ABS23504.1"/>
    <property type="molecule type" value="Genomic_DNA"/>
</dbReference>
<dbReference type="RefSeq" id="WP_012095745.1">
    <property type="nucleotide sequence ID" value="NC_009674.1"/>
</dbReference>
<dbReference type="SMR" id="A7GTP6"/>
<dbReference type="STRING" id="315749.Bcer98_3285"/>
<dbReference type="GeneID" id="33898530"/>
<dbReference type="KEGG" id="bcy:Bcer98_3285"/>
<dbReference type="eggNOG" id="COG0777">
    <property type="taxonomic scope" value="Bacteria"/>
</dbReference>
<dbReference type="HOGENOM" id="CLU_015486_1_1_9"/>
<dbReference type="OrthoDB" id="9772975at2"/>
<dbReference type="UniPathway" id="UPA00655">
    <property type="reaction ID" value="UER00711"/>
</dbReference>
<dbReference type="Proteomes" id="UP000002300">
    <property type="component" value="Chromosome"/>
</dbReference>
<dbReference type="GO" id="GO:0009317">
    <property type="term" value="C:acetyl-CoA carboxylase complex"/>
    <property type="evidence" value="ECO:0007669"/>
    <property type="project" value="InterPro"/>
</dbReference>
<dbReference type="GO" id="GO:0003989">
    <property type="term" value="F:acetyl-CoA carboxylase activity"/>
    <property type="evidence" value="ECO:0007669"/>
    <property type="project" value="InterPro"/>
</dbReference>
<dbReference type="GO" id="GO:0005524">
    <property type="term" value="F:ATP binding"/>
    <property type="evidence" value="ECO:0007669"/>
    <property type="project" value="UniProtKB-KW"/>
</dbReference>
<dbReference type="GO" id="GO:0016743">
    <property type="term" value="F:carboxyl- or carbamoyltransferase activity"/>
    <property type="evidence" value="ECO:0007669"/>
    <property type="project" value="UniProtKB-UniRule"/>
</dbReference>
<dbReference type="GO" id="GO:0008270">
    <property type="term" value="F:zinc ion binding"/>
    <property type="evidence" value="ECO:0007669"/>
    <property type="project" value="UniProtKB-UniRule"/>
</dbReference>
<dbReference type="GO" id="GO:0006633">
    <property type="term" value="P:fatty acid biosynthetic process"/>
    <property type="evidence" value="ECO:0007669"/>
    <property type="project" value="UniProtKB-KW"/>
</dbReference>
<dbReference type="GO" id="GO:2001295">
    <property type="term" value="P:malonyl-CoA biosynthetic process"/>
    <property type="evidence" value="ECO:0007669"/>
    <property type="project" value="UniProtKB-UniRule"/>
</dbReference>
<dbReference type="Gene3D" id="3.90.226.10">
    <property type="entry name" value="2-enoyl-CoA Hydratase, Chain A, domain 1"/>
    <property type="match status" value="1"/>
</dbReference>
<dbReference type="HAMAP" id="MF_01395">
    <property type="entry name" value="AcetylCoA_CT_beta"/>
    <property type="match status" value="1"/>
</dbReference>
<dbReference type="InterPro" id="IPR034733">
    <property type="entry name" value="AcCoA_carboxyl_beta"/>
</dbReference>
<dbReference type="InterPro" id="IPR000438">
    <property type="entry name" value="Acetyl_CoA_COase_Trfase_b_su"/>
</dbReference>
<dbReference type="InterPro" id="IPR029045">
    <property type="entry name" value="ClpP/crotonase-like_dom_sf"/>
</dbReference>
<dbReference type="InterPro" id="IPR011762">
    <property type="entry name" value="COA_CT_N"/>
</dbReference>
<dbReference type="InterPro" id="IPR041010">
    <property type="entry name" value="Znf-ACC"/>
</dbReference>
<dbReference type="NCBIfam" id="TIGR00515">
    <property type="entry name" value="accD"/>
    <property type="match status" value="1"/>
</dbReference>
<dbReference type="PANTHER" id="PTHR42995">
    <property type="entry name" value="ACETYL-COENZYME A CARBOXYLASE CARBOXYL TRANSFERASE SUBUNIT BETA, CHLOROPLASTIC"/>
    <property type="match status" value="1"/>
</dbReference>
<dbReference type="PANTHER" id="PTHR42995:SF5">
    <property type="entry name" value="ACETYL-COENZYME A CARBOXYLASE CARBOXYL TRANSFERASE SUBUNIT BETA, CHLOROPLASTIC"/>
    <property type="match status" value="1"/>
</dbReference>
<dbReference type="Pfam" id="PF01039">
    <property type="entry name" value="Carboxyl_trans"/>
    <property type="match status" value="1"/>
</dbReference>
<dbReference type="Pfam" id="PF17848">
    <property type="entry name" value="Zn_ribbon_ACC"/>
    <property type="match status" value="1"/>
</dbReference>
<dbReference type="PRINTS" id="PR01070">
    <property type="entry name" value="ACCCTRFRASEB"/>
</dbReference>
<dbReference type="SUPFAM" id="SSF52096">
    <property type="entry name" value="ClpP/crotonase"/>
    <property type="match status" value="1"/>
</dbReference>
<dbReference type="PROSITE" id="PS50980">
    <property type="entry name" value="COA_CT_NTER"/>
    <property type="match status" value="1"/>
</dbReference>
<evidence type="ECO:0000255" key="1">
    <source>
        <dbReference type="HAMAP-Rule" id="MF_01395"/>
    </source>
</evidence>
<evidence type="ECO:0000255" key="2">
    <source>
        <dbReference type="PROSITE-ProRule" id="PRU01136"/>
    </source>
</evidence>